<feature type="chain" id="PRO_0000405192" description="Genome polyprotein">
    <location>
        <begin position="1"/>
        <end position="3432"/>
    </location>
</feature>
<feature type="chain" id="PRO_0000037847" description="Capsid protein C" evidence="2">
    <location>
        <begin position="1"/>
        <end position="105"/>
    </location>
</feature>
<feature type="propeptide" id="PRO_0000405193" description="ER anchor for the capsid protein C, removed in mature form by serine protease NS3" evidence="2">
    <location>
        <begin position="106"/>
        <end position="127"/>
    </location>
</feature>
<feature type="chain" id="PRO_0000405194" description="Protein prM" evidence="2">
    <location>
        <begin position="128"/>
        <end position="294"/>
    </location>
</feature>
<feature type="chain" id="PRO_0000037848" description="Peptide pr" evidence="2">
    <location>
        <begin position="128"/>
        <end position="219"/>
    </location>
</feature>
<feature type="chain" id="PRO_0000037849" description="Small envelope protein M" evidence="2">
    <location>
        <begin position="220"/>
        <end position="294"/>
    </location>
</feature>
<feature type="chain" id="PRO_0000037850" description="Envelope protein E" evidence="2">
    <location>
        <begin position="295"/>
        <end position="794"/>
    </location>
</feature>
<feature type="chain" id="PRO_0000037851" description="Non-structural protein 1" evidence="2">
    <location>
        <begin position="795"/>
        <end position="1146"/>
    </location>
</feature>
<feature type="chain" id="PRO_0000037852" description="Non-structural protein 2A" evidence="2">
    <location>
        <begin position="1147"/>
        <end position="1373"/>
    </location>
</feature>
<feature type="chain" id="PRO_0000037853" description="Serine protease subunit NS2B" evidence="2">
    <location>
        <begin position="1374"/>
        <end position="1504"/>
    </location>
</feature>
<feature type="chain" id="PRO_0000037854" description="Serine protease NS3" evidence="2">
    <location>
        <begin position="1505"/>
        <end position="2123"/>
    </location>
</feature>
<feature type="chain" id="PRO_0000037855" description="Non-structural protein 4A" evidence="2">
    <location>
        <begin position="2124"/>
        <end position="2249"/>
    </location>
</feature>
<feature type="peptide" id="PRO_0000405195" description="Peptide 2k" evidence="2">
    <location>
        <begin position="2250"/>
        <end position="2272"/>
    </location>
</feature>
<feature type="chain" id="PRO_0000037856" description="Non-structural protein 4B" evidence="2">
    <location>
        <begin position="2273"/>
        <end position="2527"/>
    </location>
</feature>
<feature type="chain" id="PRO_0000037857" description="RNA-directed RNA polymerase NS5" evidence="2">
    <location>
        <begin position="2528"/>
        <end position="3432"/>
    </location>
</feature>
<feature type="topological domain" description="Cytoplasmic" evidence="12">
    <location>
        <begin position="2"/>
        <end position="109"/>
    </location>
</feature>
<feature type="transmembrane region" description="Helical" evidence="12">
    <location>
        <begin position="110"/>
        <end position="130"/>
    </location>
</feature>
<feature type="topological domain" description="Extracellular" evidence="12">
    <location>
        <begin position="131"/>
        <end position="253"/>
    </location>
</feature>
<feature type="transmembrane region" description="Helical" evidence="12">
    <location>
        <begin position="254"/>
        <end position="274"/>
    </location>
</feature>
<feature type="topological domain" description="Cytoplasmic" evidence="12">
    <location>
        <begin position="275"/>
        <end position="279"/>
    </location>
</feature>
<feature type="transmembrane region" description="Helical" evidence="20">
    <location>
        <begin position="280"/>
        <end position="294"/>
    </location>
</feature>
<feature type="topological domain" description="Extracellular" evidence="12">
    <location>
        <begin position="295"/>
        <end position="746"/>
    </location>
</feature>
<feature type="transmembrane region" description="Helical" evidence="12">
    <location>
        <begin position="747"/>
        <end position="767"/>
    </location>
</feature>
<feature type="topological domain" description="Cytoplasmic" evidence="12">
    <location>
        <begin position="768"/>
        <end position="773"/>
    </location>
</feature>
<feature type="transmembrane region" description="Helical" evidence="12">
    <location>
        <begin position="774"/>
        <end position="794"/>
    </location>
</feature>
<feature type="topological domain" description="Extracellular" evidence="12">
    <location>
        <begin position="795"/>
        <end position="1219"/>
    </location>
</feature>
<feature type="transmembrane region" description="Helical" evidence="12">
    <location>
        <begin position="1220"/>
        <end position="1240"/>
    </location>
</feature>
<feature type="topological domain" description="Cytoplasmic" evidence="12">
    <location>
        <begin position="1241"/>
        <end position="1250"/>
    </location>
</feature>
<feature type="transmembrane region" description="Helical" evidence="12">
    <location>
        <begin position="1251"/>
        <end position="1271"/>
    </location>
</feature>
<feature type="topological domain" description="Lumenal" evidence="12">
    <location>
        <position position="1272"/>
    </location>
</feature>
<feature type="transmembrane region" description="Helical" evidence="12">
    <location>
        <begin position="1273"/>
        <end position="1293"/>
    </location>
</feature>
<feature type="topological domain" description="Cytoplasmic" evidence="12">
    <location>
        <begin position="1294"/>
        <end position="1309"/>
    </location>
</feature>
<feature type="transmembrane region" description="Helical" evidence="12">
    <location>
        <begin position="1310"/>
        <end position="1330"/>
    </location>
</feature>
<feature type="topological domain" description="Lumenal" evidence="12">
    <location>
        <begin position="1331"/>
        <end position="1341"/>
    </location>
</feature>
<feature type="transmembrane region" description="Helical" evidence="12">
    <location>
        <begin position="1342"/>
        <end position="1362"/>
    </location>
</feature>
<feature type="topological domain" description="Cytoplasmic" evidence="12">
    <location>
        <begin position="1363"/>
        <end position="1374"/>
    </location>
</feature>
<feature type="transmembrane region" description="Helical" evidence="12">
    <location>
        <begin position="1375"/>
        <end position="1395"/>
    </location>
</feature>
<feature type="topological domain" description="Lumenal" evidence="12">
    <location>
        <begin position="1396"/>
        <end position="1398"/>
    </location>
</feature>
<feature type="transmembrane region" description="Helical" evidence="12">
    <location>
        <begin position="1399"/>
        <end position="1419"/>
    </location>
</feature>
<feature type="topological domain" description="Cytoplasmic" evidence="12">
    <location>
        <begin position="1420"/>
        <end position="1476"/>
    </location>
</feature>
<feature type="intramembrane region" description="Helical" evidence="12">
    <location>
        <begin position="1477"/>
        <end position="1497"/>
    </location>
</feature>
<feature type="topological domain" description="Cytoplasmic" evidence="12">
    <location>
        <begin position="1498"/>
        <end position="2173"/>
    </location>
</feature>
<feature type="transmembrane region" description="Helical" evidence="12">
    <location>
        <begin position="2174"/>
        <end position="2194"/>
    </location>
</feature>
<feature type="topological domain" description="Lumenal" evidence="12">
    <location>
        <begin position="2195"/>
        <end position="2199"/>
    </location>
</feature>
<feature type="intramembrane region" description="Helical" evidence="12">
    <location>
        <begin position="2200"/>
        <end position="2220"/>
    </location>
</feature>
<feature type="topological domain" description="Lumenal" evidence="12">
    <location>
        <position position="2221"/>
    </location>
</feature>
<feature type="transmembrane region" description="Helical" evidence="12">
    <location>
        <begin position="2222"/>
        <end position="2242"/>
    </location>
</feature>
<feature type="topological domain" description="Cytoplasmic" evidence="12">
    <location>
        <begin position="2243"/>
        <end position="2257"/>
    </location>
</feature>
<feature type="transmembrane region" description="Helical; Note=Signal for NS4B" evidence="12">
    <location>
        <begin position="2258"/>
        <end position="2278"/>
    </location>
</feature>
<feature type="topological domain" description="Lumenal" evidence="12">
    <location>
        <begin position="2279"/>
        <end position="2311"/>
    </location>
</feature>
<feature type="intramembrane region" description="Helical" evidence="12">
    <location>
        <begin position="2312"/>
        <end position="2332"/>
    </location>
</feature>
<feature type="topological domain" description="Lumenal" evidence="12">
    <location>
        <begin position="2333"/>
        <end position="2368"/>
    </location>
</feature>
<feature type="transmembrane region" description="Helical" evidence="12">
    <location>
        <begin position="2369"/>
        <end position="2389"/>
    </location>
</feature>
<feature type="topological domain" description="Cytoplasmic" evidence="12">
    <location>
        <begin position="2390"/>
        <end position="2444"/>
    </location>
</feature>
<feature type="transmembrane region" description="Helical" evidence="12">
    <location>
        <begin position="2445"/>
        <end position="2465"/>
    </location>
</feature>
<feature type="topological domain" description="Lumenal" evidence="12">
    <location>
        <begin position="2466"/>
        <end position="2469"/>
    </location>
</feature>
<feature type="transmembrane region" description="Helical" evidence="12">
    <location>
        <begin position="2470"/>
        <end position="2490"/>
    </location>
</feature>
<feature type="topological domain" description="Cytoplasmic" evidence="12">
    <location>
        <begin position="2491"/>
        <end position="3432"/>
    </location>
</feature>
<feature type="domain" description="Peptidase S7" evidence="17">
    <location>
        <begin position="1505"/>
        <end position="1682"/>
    </location>
</feature>
<feature type="domain" description="Helicase ATP-binding" evidence="14">
    <location>
        <begin position="1685"/>
        <end position="1841"/>
    </location>
</feature>
<feature type="domain" description="Helicase C-terminal" evidence="15">
    <location>
        <begin position="1852"/>
        <end position="2017"/>
    </location>
</feature>
<feature type="domain" description="mRNA cap 0-1 NS5-type MT" evidence="18">
    <location>
        <begin position="2528"/>
        <end position="2793"/>
    </location>
</feature>
<feature type="domain" description="RdRp catalytic" evidence="13">
    <location>
        <begin position="3057"/>
        <end position="3209"/>
    </location>
</feature>
<feature type="region of interest" description="Interaction with host EXOC1" evidence="2">
    <location>
        <begin position="2"/>
        <end position="15"/>
    </location>
</feature>
<feature type="region of interest" description="Hydrophobic; homodimerization of capsid protein C" evidence="8">
    <location>
        <begin position="37"/>
        <end position="72"/>
    </location>
</feature>
<feature type="region of interest" description="Fusion peptide" evidence="4">
    <location>
        <begin position="392"/>
        <end position="405"/>
    </location>
</feature>
<feature type="region of interest" description="Interacts with and activates NS3 protease" evidence="16">
    <location>
        <begin position="1427"/>
        <end position="1466"/>
    </location>
</feature>
<feature type="region of interest" description="Important for RNA-binding" evidence="5">
    <location>
        <begin position="1689"/>
        <end position="1692"/>
    </location>
</feature>
<feature type="region of interest" description="Disordered" evidence="19">
    <location>
        <begin position="1950"/>
        <end position="1972"/>
    </location>
</feature>
<feature type="region of interest" description="Regulates the ATPase activity of NS3 helicase" evidence="11">
    <location>
        <begin position="2168"/>
        <end position="2172"/>
    </location>
</feature>
<feature type="short sequence motif" description="DEAH box" evidence="14">
    <location>
        <begin position="1789"/>
        <end position="1792"/>
    </location>
</feature>
<feature type="active site" description="Charge relay system; for serine protease NS3 activity" evidence="17">
    <location>
        <position position="1555"/>
    </location>
</feature>
<feature type="active site" description="Charge relay system; for serine protease NS3 activity" evidence="17">
    <location>
        <position position="1579"/>
    </location>
</feature>
<feature type="active site" description="Charge relay system; for serine protease NS3 activity" evidence="17">
    <location>
        <position position="1639"/>
    </location>
</feature>
<feature type="active site" description="For 2'-O-MTase activity" evidence="10">
    <location>
        <position position="2588"/>
    </location>
</feature>
<feature type="active site" description="For 2'-O-MTase activity" evidence="10">
    <location>
        <position position="2673"/>
    </location>
</feature>
<feature type="active site" description="For 2'-O-MTase activity" evidence="10">
    <location>
        <position position="2709"/>
    </location>
</feature>
<feature type="active site" description="For 2'-O-MTase activity" evidence="10">
    <location>
        <position position="2745"/>
    </location>
</feature>
<feature type="binding site" evidence="14">
    <location>
        <begin position="1698"/>
        <end position="1705"/>
    </location>
    <ligand>
        <name>ATP</name>
        <dbReference type="ChEBI" id="CHEBI:30616"/>
    </ligand>
</feature>
<feature type="binding site" evidence="18">
    <location>
        <position position="2583"/>
    </location>
    <ligand>
        <name>S-adenosyl-L-methionine</name>
        <dbReference type="ChEBI" id="CHEBI:59789"/>
    </ligand>
</feature>
<feature type="binding site" evidence="18">
    <location>
        <position position="2613"/>
    </location>
    <ligand>
        <name>S-adenosyl-L-methionine</name>
        <dbReference type="ChEBI" id="CHEBI:59789"/>
    </ligand>
</feature>
<feature type="binding site" evidence="18">
    <location>
        <position position="2614"/>
    </location>
    <ligand>
        <name>S-adenosyl-L-methionine</name>
        <dbReference type="ChEBI" id="CHEBI:59789"/>
    </ligand>
</feature>
<feature type="binding site" evidence="18">
    <location>
        <position position="2631"/>
    </location>
    <ligand>
        <name>S-adenosyl-L-methionine</name>
        <dbReference type="ChEBI" id="CHEBI:59789"/>
    </ligand>
</feature>
<feature type="binding site" evidence="18">
    <location>
        <position position="2632"/>
    </location>
    <ligand>
        <name>S-adenosyl-L-methionine</name>
        <dbReference type="ChEBI" id="CHEBI:59789"/>
    </ligand>
</feature>
<feature type="binding site" evidence="18">
    <location>
        <position position="2658"/>
    </location>
    <ligand>
        <name>S-adenosyl-L-methionine</name>
        <dbReference type="ChEBI" id="CHEBI:59789"/>
    </ligand>
</feature>
<feature type="binding site" evidence="18">
    <location>
        <position position="2659"/>
    </location>
    <ligand>
        <name>S-adenosyl-L-methionine</name>
        <dbReference type="ChEBI" id="CHEBI:59789"/>
    </ligand>
</feature>
<feature type="binding site" evidence="18">
    <location>
        <position position="2674"/>
    </location>
    <ligand>
        <name>S-adenosyl-L-methionine</name>
        <dbReference type="ChEBI" id="CHEBI:59789"/>
    </ligand>
</feature>
<feature type="binding site" evidence="18">
    <location>
        <position position="2747"/>
    </location>
    <ligand>
        <name>S-adenosyl-L-methionine</name>
        <dbReference type="ChEBI" id="CHEBI:59789"/>
    </ligand>
</feature>
<feature type="binding site" evidence="3">
    <location>
        <position position="2967"/>
    </location>
    <ligand>
        <name>Zn(2+)</name>
        <dbReference type="ChEBI" id="CHEBI:29105"/>
        <label>1</label>
    </ligand>
</feature>
<feature type="binding site" evidence="3">
    <location>
        <position position="2971"/>
    </location>
    <ligand>
        <name>Zn(2+)</name>
        <dbReference type="ChEBI" id="CHEBI:29105"/>
        <label>1</label>
    </ligand>
</feature>
<feature type="binding site" evidence="3">
    <location>
        <position position="2976"/>
    </location>
    <ligand>
        <name>Zn(2+)</name>
        <dbReference type="ChEBI" id="CHEBI:29105"/>
        <label>1</label>
    </ligand>
</feature>
<feature type="binding site" evidence="3">
    <location>
        <position position="2979"/>
    </location>
    <ligand>
        <name>Zn(2+)</name>
        <dbReference type="ChEBI" id="CHEBI:29105"/>
        <label>1</label>
    </ligand>
</feature>
<feature type="binding site" evidence="3">
    <location>
        <position position="3244"/>
    </location>
    <ligand>
        <name>Zn(2+)</name>
        <dbReference type="ChEBI" id="CHEBI:29105"/>
        <label>2</label>
    </ligand>
</feature>
<feature type="binding site" evidence="3">
    <location>
        <position position="3260"/>
    </location>
    <ligand>
        <name>Zn(2+)</name>
        <dbReference type="ChEBI" id="CHEBI:29105"/>
        <label>2</label>
    </ligand>
</feature>
<feature type="binding site" evidence="3">
    <location>
        <position position="3379"/>
    </location>
    <ligand>
        <name>Zn(2+)</name>
        <dbReference type="ChEBI" id="CHEBI:29105"/>
        <label>2</label>
    </ligand>
</feature>
<feature type="site" description="Cleavage; by viral protease NS3" evidence="2">
    <location>
        <begin position="105"/>
        <end position="106"/>
    </location>
</feature>
<feature type="site" description="Cleavage; by host signal peptidase" evidence="2">
    <location>
        <begin position="127"/>
        <end position="128"/>
    </location>
</feature>
<feature type="site" description="Cleavage; by host furin" evidence="2">
    <location>
        <begin position="219"/>
        <end position="220"/>
    </location>
</feature>
<feature type="site" description="Cleavage; by host signal peptidase" evidence="2">
    <location>
        <begin position="294"/>
        <end position="295"/>
    </location>
</feature>
<feature type="site" description="Cleavage; by host signal peptidase" evidence="2">
    <location>
        <begin position="794"/>
        <end position="795"/>
    </location>
</feature>
<feature type="site" description="Cleavage; by host" evidence="2">
    <location>
        <begin position="1146"/>
        <end position="1147"/>
    </location>
</feature>
<feature type="site" description="Cleavage; by viral protease NS3" evidence="2">
    <location>
        <begin position="1373"/>
        <end position="1374"/>
    </location>
</feature>
<feature type="site" description="Cleavage; by autolysis" evidence="2">
    <location>
        <begin position="1504"/>
        <end position="1505"/>
    </location>
</feature>
<feature type="site" description="Involved in NS3 ATPase and RTPase activities" evidence="3">
    <location>
        <position position="1962"/>
    </location>
</feature>
<feature type="site" description="Involved in NS3 ATPase and RTPase activities" evidence="3">
    <location>
        <position position="1965"/>
    </location>
</feature>
<feature type="site" description="Cleavage; by autolysis" evidence="2">
    <location>
        <begin position="2123"/>
        <end position="2124"/>
    </location>
</feature>
<feature type="site" description="Cleavage; by viral protease NS3" evidence="2">
    <location>
        <begin position="2249"/>
        <end position="2250"/>
    </location>
</feature>
<feature type="site" description="Cleavage; by host signal peptidase" evidence="2">
    <location>
        <begin position="2272"/>
        <end position="2273"/>
    </location>
</feature>
<feature type="site" description="Cleavage; by viral protease NS3" evidence="2">
    <location>
        <begin position="2527"/>
        <end position="2528"/>
    </location>
</feature>
<feature type="site" description="mRNA cap binding" evidence="18">
    <location>
        <position position="2540"/>
    </location>
</feature>
<feature type="site" description="mRNA cap binding; via carbonyl oxygen" evidence="18">
    <location>
        <position position="2543"/>
    </location>
</feature>
<feature type="site" description="mRNA cap binding" evidence="18">
    <location>
        <position position="2544"/>
    </location>
</feature>
<feature type="site" description="mRNA cap binding; via carbonyl oxygen" evidence="18">
    <location>
        <position position="2546"/>
    </location>
</feature>
<feature type="site" description="mRNA cap binding" evidence="18">
    <location>
        <position position="2551"/>
    </location>
</feature>
<feature type="site" description="mRNA cap binding" evidence="18">
    <location>
        <position position="2555"/>
    </location>
</feature>
<feature type="site" description="Essential for 2'-O-methyltransferase activity" evidence="18">
    <location>
        <position position="2588"/>
    </location>
</feature>
<feature type="site" description="Essential for 2'-O-methyltransferase and N-7 methyltransferase activity" evidence="18">
    <location>
        <position position="2673"/>
    </location>
</feature>
<feature type="site" description="mRNA cap binding" evidence="18">
    <location>
        <position position="2677"/>
    </location>
</feature>
<feature type="site" description="Essential for 2'-O-methyltransferase activity" evidence="18">
    <location>
        <position position="2709"/>
    </location>
</feature>
<feature type="site" description="mRNA cap binding" evidence="18">
    <location>
        <position position="2740"/>
    </location>
</feature>
<feature type="site" description="mRNA cap binding" evidence="18">
    <location>
        <position position="2742"/>
    </location>
</feature>
<feature type="site" description="Essential for 2'-O-methyltransferase activity" evidence="18">
    <location>
        <position position="2745"/>
    </location>
</feature>
<feature type="modified residue" description="N6-acetyllysine; by host" evidence="9">
    <location>
        <position position="1893"/>
    </location>
</feature>
<feature type="modified residue" description="Phosphoserine" evidence="1">
    <location>
        <position position="2583"/>
    </location>
</feature>
<feature type="glycosylation site" description="N-linked (GlcNAc...) asparagine; by host" evidence="3">
    <location>
        <position position="142"/>
    </location>
</feature>
<feature type="glycosylation site" description="N-linked (GlcNAc...) asparagine; by host" evidence="12">
    <location>
        <position position="448"/>
    </location>
</feature>
<feature type="glycosylation site" description="N-linked (GlcNAc...) asparagine; by host" evidence="11">
    <location>
        <position position="924"/>
    </location>
</feature>
<feature type="glycosylation site" description="N-linked (GlcNAc...) asparagine; by host" evidence="11">
    <location>
        <position position="1001"/>
    </location>
</feature>
<feature type="disulfide bond" evidence="11">
    <location>
        <begin position="297"/>
        <end position="324"/>
    </location>
</feature>
<feature type="disulfide bond" evidence="11">
    <location>
        <begin position="354"/>
        <end position="415"/>
    </location>
</feature>
<feature type="disulfide bond" evidence="2">
    <location>
        <begin position="354"/>
        <end position="410"/>
    </location>
</feature>
<feature type="disulfide bond" evidence="11">
    <location>
        <begin position="368"/>
        <end position="399"/>
    </location>
</feature>
<feature type="disulfide bond" evidence="2">
    <location>
        <begin position="386"/>
        <end position="415"/>
    </location>
</feature>
<feature type="disulfide bond" evidence="11">
    <location>
        <begin position="386"/>
        <end position="410"/>
    </location>
</feature>
<feature type="disulfide bond" evidence="11">
    <location>
        <begin position="484"/>
        <end position="581"/>
    </location>
</feature>
<feature type="disulfide bond" evidence="11">
    <location>
        <begin position="598"/>
        <end position="629"/>
    </location>
</feature>
<feature type="disulfide bond" evidence="11">
    <location>
        <begin position="798"/>
        <end position="809"/>
    </location>
</feature>
<feature type="disulfide bond" evidence="11">
    <location>
        <begin position="849"/>
        <end position="937"/>
    </location>
</feature>
<feature type="disulfide bond" evidence="11">
    <location>
        <begin position="973"/>
        <end position="1017"/>
    </location>
</feature>
<feature type="disulfide bond" evidence="11">
    <location>
        <begin position="1074"/>
        <end position="1123"/>
    </location>
</feature>
<feature type="disulfide bond" evidence="11">
    <location>
        <begin position="1085"/>
        <end position="1106"/>
    </location>
</feature>
<feature type="disulfide bond" evidence="11">
    <location>
        <begin position="1107"/>
        <end position="1110"/>
    </location>
</feature>
<organismHost>
    <name type="scientific">Ardeidae</name>
    <name type="common">herons</name>
    <dbReference type="NCBI Taxonomy" id="8899"/>
</organismHost>
<organismHost>
    <name type="scientific">Bos taurus</name>
    <name type="common">Bovine</name>
    <dbReference type="NCBI Taxonomy" id="9913"/>
</organismHost>
<organismHost>
    <name type="scientific">Culex gelidus</name>
    <dbReference type="NCBI Taxonomy" id="308713"/>
</organismHost>
<organismHost>
    <name type="scientific">Culex tritaeniorhynchus</name>
    <name type="common">Mosquito</name>
    <dbReference type="NCBI Taxonomy" id="7178"/>
</organismHost>
<organismHost>
    <name type="scientific">Equus caballus</name>
    <name type="common">Horse</name>
    <dbReference type="NCBI Taxonomy" id="9796"/>
</organismHost>
<organismHost>
    <name type="scientific">Homo sapiens</name>
    <name type="common">Human</name>
    <dbReference type="NCBI Taxonomy" id="9606"/>
</organismHost>
<organismHost>
    <name type="scientific">Sus scrofa</name>
    <name type="common">Pig</name>
    <dbReference type="NCBI Taxonomy" id="9823"/>
</organismHost>
<dbReference type="EC" id="3.4.21.91" evidence="7"/>
<dbReference type="EC" id="3.6.1.15" evidence="7"/>
<dbReference type="EC" id="3.6.4.13" evidence="7"/>
<dbReference type="EC" id="2.1.1.56" evidence="18"/>
<dbReference type="EC" id="2.1.1.57" evidence="18"/>
<dbReference type="EC" id="2.7.7.48" evidence="13"/>
<dbReference type="EMBL" id="D90194">
    <property type="protein sequence ID" value="BAA14218.1"/>
    <property type="molecule type" value="Genomic_RNA"/>
</dbReference>
<dbReference type="SMR" id="P19110"/>
<dbReference type="MEROPS" id="S07.003"/>
<dbReference type="Proteomes" id="UP000007715">
    <property type="component" value="Genome"/>
</dbReference>
<dbReference type="GO" id="GO:0005576">
    <property type="term" value="C:extracellular region"/>
    <property type="evidence" value="ECO:0007669"/>
    <property type="project" value="UniProtKB-SubCell"/>
</dbReference>
<dbReference type="GO" id="GO:0044167">
    <property type="term" value="C:host cell endoplasmic reticulum membrane"/>
    <property type="evidence" value="ECO:0007669"/>
    <property type="project" value="UniProtKB-SubCell"/>
</dbReference>
<dbReference type="GO" id="GO:0042025">
    <property type="term" value="C:host cell nucleus"/>
    <property type="evidence" value="ECO:0007669"/>
    <property type="project" value="UniProtKB-SubCell"/>
</dbReference>
<dbReference type="GO" id="GO:0044220">
    <property type="term" value="C:host cell perinuclear region of cytoplasm"/>
    <property type="evidence" value="ECO:0007669"/>
    <property type="project" value="UniProtKB-SubCell"/>
</dbReference>
<dbReference type="GO" id="GO:0044228">
    <property type="term" value="C:host cell surface"/>
    <property type="evidence" value="ECO:0007669"/>
    <property type="project" value="UniProtKB-SubCell"/>
</dbReference>
<dbReference type="GO" id="GO:0016020">
    <property type="term" value="C:membrane"/>
    <property type="evidence" value="ECO:0007669"/>
    <property type="project" value="UniProtKB-KW"/>
</dbReference>
<dbReference type="GO" id="GO:0019028">
    <property type="term" value="C:viral capsid"/>
    <property type="evidence" value="ECO:0007669"/>
    <property type="project" value="UniProtKB-KW"/>
</dbReference>
<dbReference type="GO" id="GO:0019031">
    <property type="term" value="C:viral envelope"/>
    <property type="evidence" value="ECO:0007669"/>
    <property type="project" value="UniProtKB-KW"/>
</dbReference>
<dbReference type="GO" id="GO:0055036">
    <property type="term" value="C:virion membrane"/>
    <property type="evidence" value="ECO:0007669"/>
    <property type="project" value="UniProtKB-SubCell"/>
</dbReference>
<dbReference type="GO" id="GO:0005524">
    <property type="term" value="F:ATP binding"/>
    <property type="evidence" value="ECO:0007669"/>
    <property type="project" value="UniProtKB-KW"/>
</dbReference>
<dbReference type="GO" id="GO:0016887">
    <property type="term" value="F:ATP hydrolysis activity"/>
    <property type="evidence" value="ECO:0007669"/>
    <property type="project" value="RHEA"/>
</dbReference>
<dbReference type="GO" id="GO:0003725">
    <property type="term" value="F:double-stranded RNA binding"/>
    <property type="evidence" value="ECO:0007669"/>
    <property type="project" value="InterPro"/>
</dbReference>
<dbReference type="GO" id="GO:0046872">
    <property type="term" value="F:metal ion binding"/>
    <property type="evidence" value="ECO:0007669"/>
    <property type="project" value="UniProtKB-KW"/>
</dbReference>
<dbReference type="GO" id="GO:0004483">
    <property type="term" value="F:mRNA (nucleoside-2'-O-)-methyltransferase activity"/>
    <property type="evidence" value="ECO:0007669"/>
    <property type="project" value="UniProtKB-EC"/>
</dbReference>
<dbReference type="GO" id="GO:0004482">
    <property type="term" value="F:mRNA 5'-cap (guanine-N7-)-methyltransferase activity"/>
    <property type="evidence" value="ECO:0007669"/>
    <property type="project" value="UniProtKB-EC"/>
</dbReference>
<dbReference type="GO" id="GO:0046983">
    <property type="term" value="F:protein dimerization activity"/>
    <property type="evidence" value="ECO:0007669"/>
    <property type="project" value="InterPro"/>
</dbReference>
<dbReference type="GO" id="GO:0003724">
    <property type="term" value="F:RNA helicase activity"/>
    <property type="evidence" value="ECO:0007669"/>
    <property type="project" value="UniProtKB-EC"/>
</dbReference>
<dbReference type="GO" id="GO:0003968">
    <property type="term" value="F:RNA-directed RNA polymerase activity"/>
    <property type="evidence" value="ECO:0007669"/>
    <property type="project" value="UniProtKB-KW"/>
</dbReference>
<dbReference type="GO" id="GO:0004252">
    <property type="term" value="F:serine-type endopeptidase activity"/>
    <property type="evidence" value="ECO:0007669"/>
    <property type="project" value="InterPro"/>
</dbReference>
<dbReference type="GO" id="GO:0005198">
    <property type="term" value="F:structural molecule activity"/>
    <property type="evidence" value="ECO:0007669"/>
    <property type="project" value="InterPro"/>
</dbReference>
<dbReference type="GO" id="GO:0075512">
    <property type="term" value="P:clathrin-dependent endocytosis of virus by host cell"/>
    <property type="evidence" value="ECO:0007669"/>
    <property type="project" value="UniProtKB-KW"/>
</dbReference>
<dbReference type="GO" id="GO:0039654">
    <property type="term" value="P:fusion of virus membrane with host endosome membrane"/>
    <property type="evidence" value="ECO:0007669"/>
    <property type="project" value="UniProtKB-KW"/>
</dbReference>
<dbReference type="GO" id="GO:0006508">
    <property type="term" value="P:proteolysis"/>
    <property type="evidence" value="ECO:0007669"/>
    <property type="project" value="UniProtKB-KW"/>
</dbReference>
<dbReference type="GO" id="GO:0039520">
    <property type="term" value="P:symbiont-mediated activation of host autophagy"/>
    <property type="evidence" value="ECO:0007669"/>
    <property type="project" value="UniProtKB-KW"/>
</dbReference>
<dbReference type="GO" id="GO:0039574">
    <property type="term" value="P:symbiont-mediated suppression of host JAK-STAT cascade via inhibition of host TYK2 activity"/>
    <property type="evidence" value="ECO:0007669"/>
    <property type="project" value="UniProtKB-KW"/>
</dbReference>
<dbReference type="GO" id="GO:0039563">
    <property type="term" value="P:symbiont-mediated suppression of host JAK-STAT cascade via inhibition of STAT1 activity"/>
    <property type="evidence" value="ECO:0007669"/>
    <property type="project" value="UniProtKB-KW"/>
</dbReference>
<dbReference type="GO" id="GO:0039564">
    <property type="term" value="P:symbiont-mediated suppression of host JAK-STAT cascade via inhibition of STAT2 activity"/>
    <property type="evidence" value="ECO:0007669"/>
    <property type="project" value="UniProtKB-KW"/>
</dbReference>
<dbReference type="GO" id="GO:0039502">
    <property type="term" value="P:symbiont-mediated suppression of host type I interferon-mediated signaling pathway"/>
    <property type="evidence" value="ECO:0007669"/>
    <property type="project" value="UniProtKB-KW"/>
</dbReference>
<dbReference type="GO" id="GO:0039694">
    <property type="term" value="P:viral RNA genome replication"/>
    <property type="evidence" value="ECO:0007669"/>
    <property type="project" value="InterPro"/>
</dbReference>
<dbReference type="GO" id="GO:0075523">
    <property type="term" value="P:viral translational frameshifting"/>
    <property type="evidence" value="ECO:0007669"/>
    <property type="project" value="UniProtKB-KW"/>
</dbReference>
<dbReference type="GO" id="GO:0019062">
    <property type="term" value="P:virion attachment to host cell"/>
    <property type="evidence" value="ECO:0007669"/>
    <property type="project" value="UniProtKB-KW"/>
</dbReference>
<dbReference type="CDD" id="cd20761">
    <property type="entry name" value="capping_2-OMTase_Flaviviridae"/>
    <property type="match status" value="1"/>
</dbReference>
<dbReference type="CDD" id="cd17931">
    <property type="entry name" value="DEXHc_viral_Ns3"/>
    <property type="match status" value="1"/>
</dbReference>
<dbReference type="CDD" id="cd12149">
    <property type="entry name" value="Flavi_E_C"/>
    <property type="match status" value="1"/>
</dbReference>
<dbReference type="CDD" id="cd17038">
    <property type="entry name" value="Flavi_M"/>
    <property type="match status" value="1"/>
</dbReference>
<dbReference type="CDD" id="cd23204">
    <property type="entry name" value="Flavivirus_RdRp"/>
    <property type="match status" value="1"/>
</dbReference>
<dbReference type="CDD" id="cd18806">
    <property type="entry name" value="SF2_C_viral"/>
    <property type="match status" value="1"/>
</dbReference>
<dbReference type="FunFam" id="1.20.1280.260:FF:000001">
    <property type="entry name" value="Envelope glycoprotein"/>
    <property type="match status" value="1"/>
</dbReference>
<dbReference type="FunFam" id="2.60.40.350:FF:000001">
    <property type="entry name" value="Envelope glycoprotein"/>
    <property type="match status" value="1"/>
</dbReference>
<dbReference type="FunFam" id="1.10.260.90:FF:000001">
    <property type="entry name" value="Genome polyprotein"/>
    <property type="match status" value="1"/>
</dbReference>
<dbReference type="FunFam" id="2.60.260.50:FF:000001">
    <property type="entry name" value="Genome polyprotein"/>
    <property type="match status" value="1"/>
</dbReference>
<dbReference type="FunFam" id="3.30.70.2840:FF:000001">
    <property type="entry name" value="Genome polyprotein"/>
    <property type="match status" value="1"/>
</dbReference>
<dbReference type="FunFam" id="3.30.70.2840:FF:000002">
    <property type="entry name" value="Genome polyprotein"/>
    <property type="match status" value="1"/>
</dbReference>
<dbReference type="FunFam" id="3.40.50.150:FF:000105">
    <property type="entry name" value="Genome polyprotein"/>
    <property type="match status" value="1"/>
</dbReference>
<dbReference type="FunFam" id="3.40.50.300:FF:000763">
    <property type="entry name" value="Genome polyprotein"/>
    <property type="match status" value="1"/>
</dbReference>
<dbReference type="Gene3D" id="1.10.10.930">
    <property type="match status" value="1"/>
</dbReference>
<dbReference type="Gene3D" id="1.10.260.90">
    <property type="match status" value="1"/>
</dbReference>
<dbReference type="Gene3D" id="1.20.1280.260">
    <property type="match status" value="1"/>
</dbReference>
<dbReference type="Gene3D" id="2.40.10.120">
    <property type="match status" value="2"/>
</dbReference>
<dbReference type="Gene3D" id="2.60.40.350">
    <property type="match status" value="1"/>
</dbReference>
<dbReference type="Gene3D" id="1.10.8.970">
    <property type="entry name" value="Flavivirus envelope glycoprotein M-like"/>
    <property type="match status" value="1"/>
</dbReference>
<dbReference type="Gene3D" id="2.60.260.50">
    <property type="entry name" value="Flavivirus polyprotein propeptide domain"/>
    <property type="match status" value="1"/>
</dbReference>
<dbReference type="Gene3D" id="3.30.70.2840">
    <property type="entry name" value="Flavivirus RNA-directed RNA polymerase, thumb domain"/>
    <property type="match status" value="3"/>
</dbReference>
<dbReference type="Gene3D" id="3.40.50.300">
    <property type="entry name" value="P-loop containing nucleotide triphosphate hydrolases"/>
    <property type="match status" value="2"/>
</dbReference>
<dbReference type="Gene3D" id="2.60.98.10">
    <property type="entry name" value="Tick-borne Encephalitis virus Glycoprotein, domain 1"/>
    <property type="match status" value="1"/>
</dbReference>
<dbReference type="Gene3D" id="3.40.50.150">
    <property type="entry name" value="Vaccinia Virus protein VP39"/>
    <property type="match status" value="1"/>
</dbReference>
<dbReference type="Gene3D" id="3.30.67.10">
    <property type="entry name" value="Viral Envelope Glycoprotein, domain 2"/>
    <property type="match status" value="1"/>
</dbReference>
<dbReference type="Gene3D" id="3.30.387.10">
    <property type="entry name" value="Viral Envelope Glycoprotein, domain 3"/>
    <property type="match status" value="1"/>
</dbReference>
<dbReference type="InterPro" id="IPR043502">
    <property type="entry name" value="DNA/RNA_pol_sf"/>
</dbReference>
<dbReference type="InterPro" id="IPR000069">
    <property type="entry name" value="Env_glycoprot_M_flavivir"/>
</dbReference>
<dbReference type="InterPro" id="IPR038302">
    <property type="entry name" value="Env_glycoprot_M_sf_flavivir"/>
</dbReference>
<dbReference type="InterPro" id="IPR013755">
    <property type="entry name" value="Flav_gly_cen_dom_subdom1"/>
</dbReference>
<dbReference type="InterPro" id="IPR001122">
    <property type="entry name" value="Flavi_capsidC"/>
</dbReference>
<dbReference type="InterPro" id="IPR037172">
    <property type="entry name" value="Flavi_capsidC_sf"/>
</dbReference>
<dbReference type="InterPro" id="IPR011492">
    <property type="entry name" value="Flavi_DEAD"/>
</dbReference>
<dbReference type="InterPro" id="IPR027287">
    <property type="entry name" value="Flavi_E_Ig-like"/>
</dbReference>
<dbReference type="InterPro" id="IPR026470">
    <property type="entry name" value="Flavi_E_Stem/Anchor_dom"/>
</dbReference>
<dbReference type="InterPro" id="IPR038345">
    <property type="entry name" value="Flavi_E_Stem/Anchor_dom_sf"/>
</dbReference>
<dbReference type="InterPro" id="IPR011998">
    <property type="entry name" value="Flavi_Glycoprot_E_cen/dimer"/>
</dbReference>
<dbReference type="InterPro" id="IPR001157">
    <property type="entry name" value="Flavi_NS1"/>
</dbReference>
<dbReference type="InterPro" id="IPR000752">
    <property type="entry name" value="Flavi_NS2A"/>
</dbReference>
<dbReference type="InterPro" id="IPR000487">
    <property type="entry name" value="Flavi_NS2B"/>
</dbReference>
<dbReference type="InterPro" id="IPR001850">
    <property type="entry name" value="Flavi_NS3_S7"/>
</dbReference>
<dbReference type="InterPro" id="IPR000404">
    <property type="entry name" value="Flavi_NS4A"/>
</dbReference>
<dbReference type="InterPro" id="IPR001528">
    <property type="entry name" value="Flavi_NS4B"/>
</dbReference>
<dbReference type="InterPro" id="IPR046811">
    <property type="entry name" value="Flavi_NS5_thumb"/>
</dbReference>
<dbReference type="InterPro" id="IPR002535">
    <property type="entry name" value="Flavi_propep"/>
</dbReference>
<dbReference type="InterPro" id="IPR038688">
    <property type="entry name" value="Flavi_propep_sf"/>
</dbReference>
<dbReference type="InterPro" id="IPR047530">
    <property type="entry name" value="Flavi_RdRp"/>
</dbReference>
<dbReference type="InterPro" id="IPR000208">
    <property type="entry name" value="Flavi_RdRp_fingers/palm"/>
</dbReference>
<dbReference type="InterPro" id="IPR000336">
    <property type="entry name" value="Flavivir/Alphavir_Ig-like_sf"/>
</dbReference>
<dbReference type="InterPro" id="IPR014412">
    <property type="entry name" value="Gen_Poly_FLV"/>
</dbReference>
<dbReference type="InterPro" id="IPR036253">
    <property type="entry name" value="Glycoprot_cen/dimer_sf"/>
</dbReference>
<dbReference type="InterPro" id="IPR038055">
    <property type="entry name" value="Glycoprot_E_dimer_dom"/>
</dbReference>
<dbReference type="InterPro" id="IPR013756">
    <property type="entry name" value="GlyE_cen_dom_subdom2"/>
</dbReference>
<dbReference type="InterPro" id="IPR014001">
    <property type="entry name" value="Helicase_ATP-bd"/>
</dbReference>
<dbReference type="InterPro" id="IPR001650">
    <property type="entry name" value="Helicase_C-like"/>
</dbReference>
<dbReference type="InterPro" id="IPR014756">
    <property type="entry name" value="Ig_E-set"/>
</dbReference>
<dbReference type="InterPro" id="IPR026490">
    <property type="entry name" value="mRNA_cap_0/1_MeTrfase"/>
</dbReference>
<dbReference type="InterPro" id="IPR049486">
    <property type="entry name" value="NS3-hel_C_flaviviridae"/>
</dbReference>
<dbReference type="InterPro" id="IPR027417">
    <property type="entry name" value="P-loop_NTPase"/>
</dbReference>
<dbReference type="InterPro" id="IPR009003">
    <property type="entry name" value="Peptidase_S1_PA"/>
</dbReference>
<dbReference type="InterPro" id="IPR007094">
    <property type="entry name" value="RNA-dir_pol_PSvirus"/>
</dbReference>
<dbReference type="InterPro" id="IPR002877">
    <property type="entry name" value="RNA_MeTrfase_FtsJ_dom"/>
</dbReference>
<dbReference type="InterPro" id="IPR029063">
    <property type="entry name" value="SAM-dependent_MTases_sf"/>
</dbReference>
<dbReference type="NCBIfam" id="TIGR04240">
    <property type="entry name" value="flavi_E_stem"/>
    <property type="match status" value="1"/>
</dbReference>
<dbReference type="Pfam" id="PF20907">
    <property type="entry name" value="Flav_NS3-hel_C"/>
    <property type="match status" value="1"/>
</dbReference>
<dbReference type="Pfam" id="PF01003">
    <property type="entry name" value="Flavi_capsid"/>
    <property type="match status" value="1"/>
</dbReference>
<dbReference type="Pfam" id="PF07652">
    <property type="entry name" value="Flavi_DEAD"/>
    <property type="match status" value="1"/>
</dbReference>
<dbReference type="Pfam" id="PF21659">
    <property type="entry name" value="Flavi_E_stem"/>
    <property type="match status" value="1"/>
</dbReference>
<dbReference type="Pfam" id="PF02832">
    <property type="entry name" value="Flavi_glycop_C"/>
    <property type="match status" value="1"/>
</dbReference>
<dbReference type="Pfam" id="PF00869">
    <property type="entry name" value="Flavi_glycoprot"/>
    <property type="match status" value="1"/>
</dbReference>
<dbReference type="Pfam" id="PF01004">
    <property type="entry name" value="Flavi_M"/>
    <property type="match status" value="1"/>
</dbReference>
<dbReference type="Pfam" id="PF00948">
    <property type="entry name" value="Flavi_NS1"/>
    <property type="match status" value="1"/>
</dbReference>
<dbReference type="Pfam" id="PF01005">
    <property type="entry name" value="Flavi_NS2A"/>
    <property type="match status" value="1"/>
</dbReference>
<dbReference type="Pfam" id="PF01002">
    <property type="entry name" value="Flavi_NS2B"/>
    <property type="match status" value="1"/>
</dbReference>
<dbReference type="Pfam" id="PF01350">
    <property type="entry name" value="Flavi_NS4A"/>
    <property type="match status" value="1"/>
</dbReference>
<dbReference type="Pfam" id="PF01349">
    <property type="entry name" value="Flavi_NS4B"/>
    <property type="match status" value="1"/>
</dbReference>
<dbReference type="Pfam" id="PF00972">
    <property type="entry name" value="Flavi_NS5"/>
    <property type="match status" value="1"/>
</dbReference>
<dbReference type="Pfam" id="PF20483">
    <property type="entry name" value="Flavi_NS5_thumb"/>
    <property type="match status" value="1"/>
</dbReference>
<dbReference type="Pfam" id="PF01570">
    <property type="entry name" value="Flavi_propep"/>
    <property type="match status" value="1"/>
</dbReference>
<dbReference type="Pfam" id="PF01728">
    <property type="entry name" value="FtsJ"/>
    <property type="match status" value="1"/>
</dbReference>
<dbReference type="Pfam" id="PF00949">
    <property type="entry name" value="Peptidase_S7"/>
    <property type="match status" value="1"/>
</dbReference>
<dbReference type="PIRSF" id="PIRSF003817">
    <property type="entry name" value="Gen_Poly_FLV"/>
    <property type="match status" value="1"/>
</dbReference>
<dbReference type="SMART" id="SM00487">
    <property type="entry name" value="DEXDc"/>
    <property type="match status" value="1"/>
</dbReference>
<dbReference type="SMART" id="SM00490">
    <property type="entry name" value="HELICc"/>
    <property type="match status" value="1"/>
</dbReference>
<dbReference type="SUPFAM" id="SSF56672">
    <property type="entry name" value="DNA/RNA polymerases"/>
    <property type="match status" value="1"/>
</dbReference>
<dbReference type="SUPFAM" id="SSF81296">
    <property type="entry name" value="E set domains"/>
    <property type="match status" value="1"/>
</dbReference>
<dbReference type="SUPFAM" id="SSF101257">
    <property type="entry name" value="Flavivirus capsid protein C"/>
    <property type="match status" value="1"/>
</dbReference>
<dbReference type="SUPFAM" id="SSF52540">
    <property type="entry name" value="P-loop containing nucleoside triphosphate hydrolases"/>
    <property type="match status" value="2"/>
</dbReference>
<dbReference type="SUPFAM" id="SSF53335">
    <property type="entry name" value="S-adenosyl-L-methionine-dependent methyltransferases"/>
    <property type="match status" value="1"/>
</dbReference>
<dbReference type="SUPFAM" id="SSF50494">
    <property type="entry name" value="Trypsin-like serine proteases"/>
    <property type="match status" value="1"/>
</dbReference>
<dbReference type="SUPFAM" id="SSF56983">
    <property type="entry name" value="Viral glycoprotein, central and dimerisation domains"/>
    <property type="match status" value="1"/>
</dbReference>
<dbReference type="PROSITE" id="PS51527">
    <property type="entry name" value="FLAVIVIRUS_NS2B"/>
    <property type="match status" value="1"/>
</dbReference>
<dbReference type="PROSITE" id="PS51528">
    <property type="entry name" value="FLAVIVIRUS_NS3PRO"/>
    <property type="match status" value="1"/>
</dbReference>
<dbReference type="PROSITE" id="PS51192">
    <property type="entry name" value="HELICASE_ATP_BIND_1"/>
    <property type="match status" value="1"/>
</dbReference>
<dbReference type="PROSITE" id="PS51194">
    <property type="entry name" value="HELICASE_CTER"/>
    <property type="match status" value="1"/>
</dbReference>
<dbReference type="PROSITE" id="PS50507">
    <property type="entry name" value="RDRP_SSRNA_POS"/>
    <property type="match status" value="1"/>
</dbReference>
<dbReference type="PROSITE" id="PS51591">
    <property type="entry name" value="RNA_CAP01_NS5_MT"/>
    <property type="match status" value="1"/>
</dbReference>
<organism>
    <name type="scientific">Japanese encephalitis virus (strain SA(v))</name>
    <name type="common">JEV</name>
    <dbReference type="NCBI Taxonomy" id="11074"/>
    <lineage>
        <taxon>Viruses</taxon>
        <taxon>Riboviria</taxon>
        <taxon>Orthornavirae</taxon>
        <taxon>Kitrinoviricota</taxon>
        <taxon>Flasuviricetes</taxon>
        <taxon>Amarillovirales</taxon>
        <taxon>Flaviviridae</taxon>
        <taxon>Orthoflavivirus</taxon>
        <taxon>Orthoflavivirus japonicum</taxon>
    </lineage>
</organism>
<evidence type="ECO:0000250" key="1">
    <source>
        <dbReference type="UniProtKB" id="P03314"/>
    </source>
</evidence>
<evidence type="ECO:0000250" key="2">
    <source>
        <dbReference type="UniProtKB" id="P06935"/>
    </source>
</evidence>
<evidence type="ECO:0000250" key="3">
    <source>
        <dbReference type="UniProtKB" id="P14335"/>
    </source>
</evidence>
<evidence type="ECO:0000250" key="4">
    <source>
        <dbReference type="UniProtKB" id="P14336"/>
    </source>
</evidence>
<evidence type="ECO:0000250" key="5">
    <source>
        <dbReference type="UniProtKB" id="P14340"/>
    </source>
</evidence>
<evidence type="ECO:0000250" key="6">
    <source>
        <dbReference type="UniProtKB" id="P17763"/>
    </source>
</evidence>
<evidence type="ECO:0000250" key="7">
    <source>
        <dbReference type="UniProtKB" id="P27395"/>
    </source>
</evidence>
<evidence type="ECO:0000250" key="8">
    <source>
        <dbReference type="UniProtKB" id="P29990"/>
    </source>
</evidence>
<evidence type="ECO:0000250" key="9">
    <source>
        <dbReference type="UniProtKB" id="Q32ZE1"/>
    </source>
</evidence>
<evidence type="ECO:0000250" key="10">
    <source>
        <dbReference type="UniProtKB" id="Q6YMS4"/>
    </source>
</evidence>
<evidence type="ECO:0000250" key="11">
    <source>
        <dbReference type="UniProtKB" id="Q9Q6P4"/>
    </source>
</evidence>
<evidence type="ECO:0000255" key="12"/>
<evidence type="ECO:0000255" key="13">
    <source>
        <dbReference type="PROSITE-ProRule" id="PRU00539"/>
    </source>
</evidence>
<evidence type="ECO:0000255" key="14">
    <source>
        <dbReference type="PROSITE-ProRule" id="PRU00541"/>
    </source>
</evidence>
<evidence type="ECO:0000255" key="15">
    <source>
        <dbReference type="PROSITE-ProRule" id="PRU00542"/>
    </source>
</evidence>
<evidence type="ECO:0000255" key="16">
    <source>
        <dbReference type="PROSITE-ProRule" id="PRU00859"/>
    </source>
</evidence>
<evidence type="ECO:0000255" key="17">
    <source>
        <dbReference type="PROSITE-ProRule" id="PRU00860"/>
    </source>
</evidence>
<evidence type="ECO:0000255" key="18">
    <source>
        <dbReference type="PROSITE-ProRule" id="PRU00924"/>
    </source>
</evidence>
<evidence type="ECO:0000256" key="19">
    <source>
        <dbReference type="SAM" id="MobiDB-lite"/>
    </source>
</evidence>
<evidence type="ECO:0000305" key="20"/>
<keyword id="KW-0007">Acetylation</keyword>
<keyword id="KW-1072">Activation of host autophagy by virus</keyword>
<keyword id="KW-0067">ATP-binding</keyword>
<keyword id="KW-0167">Capsid protein</keyword>
<keyword id="KW-1165">Clathrin-mediated endocytosis of virus by host</keyword>
<keyword id="KW-0165">Cleavage on pair of basic residues</keyword>
<keyword id="KW-1015">Disulfide bond</keyword>
<keyword id="KW-1170">Fusion of virus membrane with host endosomal membrane</keyword>
<keyword id="KW-1168">Fusion of virus membrane with host membrane</keyword>
<keyword id="KW-0325">Glycoprotein</keyword>
<keyword id="KW-0347">Helicase</keyword>
<keyword id="KW-1035">Host cytoplasm</keyword>
<keyword id="KW-1038">Host endoplasmic reticulum</keyword>
<keyword id="KW-1043">Host membrane</keyword>
<keyword id="KW-1048">Host nucleus</keyword>
<keyword id="KW-0945">Host-virus interaction</keyword>
<keyword id="KW-0378">Hydrolase</keyword>
<keyword id="KW-1090">Inhibition of host innate immune response by virus</keyword>
<keyword id="KW-1114">Inhibition of host interferon signaling pathway by virus</keyword>
<keyword id="KW-1105">Inhibition of host STAT1 by virus</keyword>
<keyword id="KW-1106">Inhibition of host STAT2 by virus</keyword>
<keyword id="KW-1112">Inhibition of host TYK2 by virus</keyword>
<keyword id="KW-0922">Interferon antiviral system evasion</keyword>
<keyword id="KW-0472">Membrane</keyword>
<keyword id="KW-0479">Metal-binding</keyword>
<keyword id="KW-0489">Methyltransferase</keyword>
<keyword id="KW-0506">mRNA capping</keyword>
<keyword id="KW-0507">mRNA processing</keyword>
<keyword id="KW-0511">Multifunctional enzyme</keyword>
<keyword id="KW-0547">Nucleotide-binding</keyword>
<keyword id="KW-0548">Nucleotidyltransferase</keyword>
<keyword id="KW-0597">Phosphoprotein</keyword>
<keyword id="KW-0645">Protease</keyword>
<keyword id="KW-0688">Ribosomal frameshifting</keyword>
<keyword id="KW-0694">RNA-binding</keyword>
<keyword id="KW-0696">RNA-directed RNA polymerase</keyword>
<keyword id="KW-0949">S-adenosyl-L-methionine</keyword>
<keyword id="KW-0964">Secreted</keyword>
<keyword id="KW-0720">Serine protease</keyword>
<keyword id="KW-0941">Suppressor of RNA silencing</keyword>
<keyword id="KW-0804">Transcription</keyword>
<keyword id="KW-0805">Transcription regulation</keyword>
<keyword id="KW-0808">Transferase</keyword>
<keyword id="KW-0812">Transmembrane</keyword>
<keyword id="KW-1133">Transmembrane helix</keyword>
<keyword id="KW-1161">Viral attachment to host cell</keyword>
<keyword id="KW-0261">Viral envelope protein</keyword>
<keyword id="KW-0899">Viral immunoevasion</keyword>
<keyword id="KW-1162">Viral penetration into host cytoplasm</keyword>
<keyword id="KW-0693">Viral RNA replication</keyword>
<keyword id="KW-0946">Virion</keyword>
<keyword id="KW-1164">Virus endocytosis by host</keyword>
<keyword id="KW-1160">Virus entry into host cell</keyword>
<keyword id="KW-0862">Zinc</keyword>
<name>POLG_JAEV5</name>
<proteinExistence type="inferred from homology"/>
<accession>P19110</accession>
<sequence length="3432" mass="380182">MTKKPGGPGKNRAINMLKRGLPRVFPLVGVKRVVMSLLDGRGPVRFVLALITFFKFTALAPTKALLGRWKAVEKSVAMKHLTSFKRELGTLIDAVNKRGRKQNKRGGNEGSIMWLASLAVVIACAGAMKLSNFQGKLLMTINNTDIADVIVIPTSKGENRCWVRAIDVGYMCEDTITYECPKLTMGNDPEDVDCWCDNQEVYVQYGRCTRTRHSKRSRRSVSVQTHGESSLVNKKEAWLDSTKATRYLMKTENWIIRNPGYAFLAAVLGWMLGSNNGQRVVFTILLLLVAPAYSFNCLGMGNRDFIEGASGATWVDLVLEGDSCLTIMANDKPTLDVRMINIEASQLAEVRSYCYHASVTDISTVARCPTTGEAHNEKRADSSYVCKQGFTDRGWGNGCGLFGKGSIDTCAKFSCTSKAIGRTIQPENIKYEVGIFVHGTTTSENHGNYSAQVGASQAAKFTVTPNAPSITLKLGDYGEVTLDCEPRSGLNTEAFYVMTVGSKSFLVHREWFHDLALPWTSPSSTAWRNRELLMEFEGAHATKQSVVALGSQEGGLHQALAGAIVVEYSSSVKLTSGHLKCRLKMDKLALKGTTYGMCTEKFSFAKNPADTGHGTVVIELSYSGSDGSCKIPIVSVASLNDMTPVGRLVTVNPFVATSSANSKVLVEMEPPFGDSYIVVGRGDKQINHHWHKAGSTLGKAFSTTLKGAQRLAALGDTAWDFGSIGGVFNSIGKAVHQVFGGAFRTLFGGMSWITQGLMGALLLWMGVNARDRSIALAFLATGGVLVFLATNVHADTGCAIDITRKEMRCGSGIFVHNDVEAWVDRYKYLPETPRSLAKIVHKAHKEGVCGVRSVTRLEHQMWEAVRDELNVLLKENAVDLSVVVNKPVGRYRSAPKRLSMTQEKFEMGWKAWGKSILFAPELANSTFVVDGPETKECPDEHRAWNSMQIEDFGFGITSTRVWLKIREESTDECDGAIIGTAVKGHVAVHSDLSYWIESRYNDTWKLERAVFGEVKSCTWPETHTLWGDDVEESELIIPHTIAGPKSKHNRREGYKTQNQGPWDENGIVLDFDYCPGTKVTITEDCGKRGPSVRTTTDSGKLITDWCCRSCSLPPLRFRTENGCWYGMEIRPVRHDETTLVRSQVDAFNGEMVDPFQLGLLVMFLATQEVLRKRWTARLTIPAVLGALLVLMLGGITYTDLARYVVLVAAAFAEANSGGDVLHLALIAVFKIQPAFLVMNMLSTRWTNQENVVLVLGAAFFQLASVDLQIGVHGILNAAAIAWMIVRAITFPTTSSVTMPVLALLTPGMRALYLDTYRIILLVIGICSLLHERKKTMAKKKGAVLLGLALTSTGWFSPTTIAAGLMVCNPNKKRGWPATEFLSAVGLMFAIVGGLAELDIESMSIPFMLAGLMAVSYVVSGKATDMWLERAADISWEMDAAITGSSRRLDVKLDDDGDFHLIDDPGVPWKVWVLRMSCIGLAALTPWAIVPAAFGYWLTLKTTKRGGVFWDTPSPKPCSKGDTTTGVYRIMARGILGTYQAGVGVMYENVFHTLWHTTRGAAIMSGEGKLTPYWGSVREDRIAYGGPWRFDRKWNGTDDVQVIVVEPGKAAVNIQTKPGVFRTPFGEVGAVSLDYPRGTSGSPILDSNGDIIGLYGNGVELGDGSYVSAIVQGDRQEEPVPEAYTPNMLRKRQMTVLDLHPGSGKTRKILPQIIKDAIQQRLRTAVLAPTRVVAAEMAEVLRGLPVRYQTSAVQREHQGNEIVDVMCHATLTHRLMSPNRVPNYNLFVMDEAHFTDPASIAARGYIATKVELGEAAAIFMTATPPGTTDPFPDSNAPIHDLQDEIPDRAWSSGYEWITEYAGKTVWFVASVKMGNEIAMCLQRAGKKVIQLNRKSYDTEYPKCKNGDWDFVITTDISEMGANFGASRVIDCRKSVKPTILEEGEGRVILGNPSPITSASAAQRRGRVGRNPNQVGDEYHYGGATSEDDSNLAHWTEAKIMLDNIHMPNGLVAQLYGPEREKAFTMDGEYRLRGEEKKNFLELLRTADLPVWLAYKVASNGIQYTDRKWCFDGPRTNAILEDNTEVEIVTRMGERKILKPRWLDARVYADHQALKWFKDFAAGKRSAVSFIEVLGRMPEHFMGKTREALDTMYLVATAEKGGKAHRMALEELPDALETITLIVAITVMTGGFFLLMMQRKGIGKMGLGALVLTLATFFLWAAEVPGTKIAGTLLIALLLMVVLIPEPEKQRSQTDNQLAVFLICVLTVVGVVAANEYGMLEKTKADLKSMFGGKTQASGLTGLPSMALDLRPATAWALYGGSTVVLTPLLKHLITSEYVTTSLASINSQAGSLFVLPRGVPFTDLDLTVGLVFLGCWGQITLTTFLTAMVLATLHYGYMLPGWQAEALRAAQRRTAAGIMKNAVVDGMVATDVPELERTTPLMQKKVGQVLLIGVSVAAFLVNPNVTTVREAGVLVTAATLTLWDNGASAVWNSTTATGLCHVMRGSYLAGGSIAWTLIKNADKPSLKRGRPGGRTLGEQWKEKLNAMSREEFFKYRREAIIEVDRTEARRARRENNIVGGHPVSRGSAKLRWLVEKGFVSPIGKVIDLGCGRGGWSYYAATLKKVQEVRGYTKGGAGHEEPMLMQSYGWNLVSLKSGVDVFYKPSEPSDTLFCDIGESSPSPEVEEQRTLRVLEMTSDWLHRGPREFCIKVLCPYMPKVIEKMEVLQRRFGGGLVRLPLSRNSNHEMYWVSGAAGNVVHAVNMTSQVLLGRMDRTVWRGPKYEEDVNLGSGTRAVGKGEVHSNQEKIKKRIQKLKEEFATTWHKDPEHPYRTWTYHGSYEVKATGSASSLVNGVVKLMSKPWDAIANVTTMAMTDTTPFGQQRVFKEKVDTKAPEPPAGAKEVLNETTNWLWAHLSREKRPRLCTKEEFIKKVNSNAALGAVFAEQNQWSTAREAVDDPRFWEMVDEERENHLRGECHTCIYNMMGKREKKPGEFGKAKGSRAIWFMWLGARYLEFEALGFLNEDHWLSRENSGGGVEGSGVQKLGYILRDIAGKQGGKMYADDTAGWDTRITRTDLENEAKVLELLDGEHRMLARAIIELTYRHKVVKVMRPAAEGKTVMDVISREDQRGSGQVVTYALNTFTNIAVQLVRLMEAEGVIGPQHLEQLPRKNKIAVRTWLFENGEERVTRMAISGDDCVVKPLDDRFATALHFLNAMSKVRKDIQEWKPSHGWHDWQQVPFCSNHFQEIVMKDGRSIVVPCRGQDELIDRARISPGAGWNVKDTACLAKAYAQMWLLLYFHRRDLRLMANAICSAVPVDWVPTGRTSWSIHSKGEWMTTEDMLQVWNRVWIEENEWMMDKTPITSWTDVPYVGKREDIWCGSLIGTRSRATWAENIYAAINQVRAVIGKENYVDYMTSLRRYEDVLIQEDRVI</sequence>
<protein>
    <recommendedName>
        <fullName>Genome polyprotein</fullName>
    </recommendedName>
    <component>
        <recommendedName>
            <fullName>Capsid protein C</fullName>
        </recommendedName>
        <alternativeName>
            <fullName>Core protein</fullName>
        </alternativeName>
    </component>
    <component>
        <recommendedName>
            <fullName>Protein prM</fullName>
        </recommendedName>
    </component>
    <component>
        <recommendedName>
            <fullName>Peptide pr</fullName>
        </recommendedName>
    </component>
    <component>
        <recommendedName>
            <fullName>Small envelope protein M</fullName>
        </recommendedName>
        <alternativeName>
            <fullName>Matrix protein</fullName>
        </alternativeName>
    </component>
    <component>
        <recommendedName>
            <fullName>Envelope protein E</fullName>
        </recommendedName>
    </component>
    <component>
        <recommendedName>
            <fullName>Non-structural protein 1</fullName>
            <shortName>NS1</shortName>
        </recommendedName>
    </component>
    <component>
        <recommendedName>
            <fullName>Non-structural protein 2A</fullName>
            <shortName>NS2A</shortName>
        </recommendedName>
    </component>
    <component>
        <recommendedName>
            <fullName>Serine protease subunit NS2B</fullName>
        </recommendedName>
        <alternativeName>
            <fullName>Flavivirin protease NS2B regulatory subunit</fullName>
        </alternativeName>
        <alternativeName>
            <fullName>Non-structural protein 2B</fullName>
        </alternativeName>
    </component>
    <component>
        <recommendedName>
            <fullName>Serine protease NS3</fullName>
            <ecNumber evidence="7">3.4.21.91</ecNumber>
            <ecNumber evidence="7">3.6.1.15</ecNumber>
            <ecNumber evidence="7">3.6.4.13</ecNumber>
        </recommendedName>
        <alternativeName>
            <fullName>Flavivirin protease NS3 catalytic subunit</fullName>
        </alternativeName>
        <alternativeName>
            <fullName>Non-structural protein 3</fullName>
        </alternativeName>
    </component>
    <component>
        <recommendedName>
            <fullName>Non-structural protein 4A</fullName>
            <shortName>NS4A</shortName>
        </recommendedName>
    </component>
    <component>
        <recommendedName>
            <fullName>Peptide 2k</fullName>
        </recommendedName>
    </component>
    <component>
        <recommendedName>
            <fullName>Non-structural protein 4B</fullName>
            <shortName>NS4B</shortName>
        </recommendedName>
    </component>
    <component>
        <recommendedName>
            <fullName>RNA-directed RNA polymerase NS5</fullName>
            <ecNumber evidence="18">2.1.1.56</ecNumber>
            <ecNumber evidence="18">2.1.1.57</ecNumber>
            <ecNumber evidence="13">2.7.7.48</ecNumber>
        </recommendedName>
        <alternativeName>
            <fullName>Non-structural protein 5</fullName>
        </alternativeName>
    </component>
</protein>
<comment type="function">
    <molecule>Capsid protein C</molecule>
    <text evidence="6">Plays a role in virus budding by binding to the cell membrane and gathering the viral RNA into a nucleocapsid that forms the core of a mature virus particle. During virus entry, may induce genome penetration into the host cytoplasm after hemifusion induced by the surface proteins. Can migrate to the cell nucleus where it modulates host functions. Overcomes the anti-viral effects of host EXOC1 by sequestering and degrading the latter through the proteasome degradation pathway.</text>
</comment>
<comment type="function">
    <molecule>Capsid protein C</molecule>
    <text evidence="1">Inhibits RNA silencing by interfering with host Dicer.</text>
</comment>
<comment type="function">
    <molecule>Peptide pr</molecule>
    <text evidence="6">Prevents premature fusion activity of envelope proteins in trans-Golgi by binding to envelope protein E at pH6.0. After virion release in extracellular space, gets dissociated from E dimers.</text>
</comment>
<comment type="function">
    <molecule>Protein prM</molecule>
    <text evidence="6">Acts as a chaperone for envelope protein E during intracellular virion assembly by masking and inactivating envelope protein E fusion peptide. prM is the only viral peptide matured by host furin in the trans-Golgi network probably to avoid catastrophic activation of the viral fusion activity in acidic Golgi compartment prior to virion release. prM-E cleavage is inefficient, and many virions are only partially matured. These uncleaved prM would play a role in immune evasion.</text>
</comment>
<comment type="function">
    <molecule>Small envelope protein M</molecule>
    <text evidence="6">May play a role in virus budding. Exerts cytotoxic effects by activating a mitochondrial apoptotic pathway through M ectodomain. May display a viroporin activity.</text>
</comment>
<comment type="function">
    <molecule>Envelope protein E</molecule>
    <text evidence="6">Binds to host cell surface receptor and mediates fusion between viral and cellular membranes. Efficient virus attachment to cell is, at least in part, mediated by host HSPA5. Envelope protein is synthesized in the endoplasmic reticulum in the form of heterodimer with protein prM. They play a role in virion budding in the ER, and the newly formed immature particle is covered with 60 spikes composed of heterodimer between precursor prM and envelope protein E. The virion is transported to the Golgi apparatus where the low pH causes dissociation of PrM-E heterodimers and formation of E homodimers. prM-E cleavage is inefficient, and many virions are only partially matured. These uncleaved prM would play a role in immune evasion.</text>
</comment>
<comment type="function">
    <molecule>Non-structural protein 1</molecule>
    <text evidence="11">Involved in immune evasion, pathogenesis and viral replication. Once cleaved off the polyprotein, is targeted to three destinations: the viral replication cycle, the plasma membrane and the extracellular compartment. Essential for viral replication. Required for formation of the replication complex and recruitment of other non-structural proteins to the ER-derived membrane structures. Excreted as a hexameric lipoparticle that plays a role against host immune response. Antagonizing the complement function. Binds to the host macrophages and dendritic cells. Inhibits signal transduction originating from Toll-like receptor 3 (TLR3).</text>
</comment>
<comment type="function">
    <molecule>Non-structural protein 2A</molecule>
    <text evidence="3">Component of the viral RNA replication complex that functions in virion assembly and antagonizes the host alpha/beta interferon antiviral response.</text>
</comment>
<comment type="function">
    <molecule>Serine protease subunit NS2B</molecule>
    <text evidence="6 16">Required cofactor for the serine protease function of NS3. May have membrane-destabilizing activity and form viroporins (By similarity).</text>
</comment>
<comment type="function">
    <molecule>Serine protease NS3</molecule>
    <text evidence="17">Displays three enzymatic activities: serine protease, NTPase and RNA helicase. NS3 serine protease, in association with NS2B, performs its autocleavage and cleaves the polyprotein at dibasic sites in the cytoplasm: C-prM, NS2A-NS2B, NS2B-NS3, NS3-NS4A, NS4A-2K and NS4B-NS5. NS3 RNA helicase binds RNA and unwinds dsRNA in the 3' to 5' direction.</text>
</comment>
<comment type="function">
    <molecule>Non-structural protein 4A</molecule>
    <text evidence="11">Regulates the ATPase activity of the NS3 helicase activity. NS4A allows NS3 helicase to conserve energy during unwinding.</text>
</comment>
<comment type="function">
    <molecule>Peptide 2k</molecule>
    <text evidence="6">Functions as a signal peptide for NS4B and is required for the interferon antagonism activity of the latter.</text>
</comment>
<comment type="function">
    <molecule>Non-structural protein 4B</molecule>
    <text evidence="11">Induces the formation of ER-derived membrane vesicles where the viral replication takes place (By similarity). Inhibits interferon (IFN)-induced host STAT1 phosphorylation and nuclear translocation, thereby preventing the establishment of cellular antiviral state by blocking the IFN-alpha/beta pathway (By similarity). Inhibits STAT2 translocation in the nucleus after IFN-alpha treatment (By similarity).</text>
</comment>
<comment type="function">
    <molecule>RNA-directed RNA polymerase NS5</molecule>
    <text evidence="7 11">Replicates the viral (+) and (-) RNA genome (By similarity). Performs the capping of genomes in the cytoplasm. NS5 methylates viral RNA cap at guanine N-7 and ribose 2'-O positions (By similarity). Besides its role in RNA genome replication, also prevents the establishment of cellular antiviral state by blocking the interferon-alpha/beta (IFN-alpha/beta) signaling pathway (By similarity). Inhibits host TYK2 and STAT2 phosphorylation, thereby preventing activation of JAK-STAT signaling pathway (By similarity).</text>
</comment>
<comment type="catalytic activity">
    <reaction>
        <text>Selective hydrolysis of -Xaa-Xaa-|-Yaa- bonds in which each of the Xaa can be either Arg or Lys and Yaa can be either Ser or Ala.</text>
        <dbReference type="EC" id="3.4.21.91"/>
    </reaction>
</comment>
<comment type="catalytic activity">
    <reaction evidence="13">
        <text>RNA(n) + a ribonucleoside 5'-triphosphate = RNA(n+1) + diphosphate</text>
        <dbReference type="Rhea" id="RHEA:21248"/>
        <dbReference type="Rhea" id="RHEA-COMP:14527"/>
        <dbReference type="Rhea" id="RHEA-COMP:17342"/>
        <dbReference type="ChEBI" id="CHEBI:33019"/>
        <dbReference type="ChEBI" id="CHEBI:61557"/>
        <dbReference type="ChEBI" id="CHEBI:140395"/>
        <dbReference type="EC" id="2.7.7.48"/>
    </reaction>
</comment>
<comment type="catalytic activity">
    <reaction>
        <text>a ribonucleoside 5'-triphosphate + H2O = a ribonucleoside 5'-diphosphate + phosphate + H(+)</text>
        <dbReference type="Rhea" id="RHEA:23680"/>
        <dbReference type="ChEBI" id="CHEBI:15377"/>
        <dbReference type="ChEBI" id="CHEBI:15378"/>
        <dbReference type="ChEBI" id="CHEBI:43474"/>
        <dbReference type="ChEBI" id="CHEBI:57930"/>
        <dbReference type="ChEBI" id="CHEBI:61557"/>
        <dbReference type="EC" id="3.6.1.15"/>
    </reaction>
</comment>
<comment type="catalytic activity">
    <reaction evidence="11">
        <text>ATP + H2O = ADP + phosphate + H(+)</text>
        <dbReference type="Rhea" id="RHEA:13065"/>
        <dbReference type="ChEBI" id="CHEBI:15377"/>
        <dbReference type="ChEBI" id="CHEBI:15378"/>
        <dbReference type="ChEBI" id="CHEBI:30616"/>
        <dbReference type="ChEBI" id="CHEBI:43474"/>
        <dbReference type="ChEBI" id="CHEBI:456216"/>
        <dbReference type="EC" id="3.6.4.13"/>
    </reaction>
</comment>
<comment type="catalytic activity">
    <reaction evidence="18">
        <text>a 5'-end (5'-triphosphoguanosine)-ribonucleoside in mRNA + S-adenosyl-L-methionine = a 5'-end (N(7)-methyl 5'-triphosphoguanosine)-ribonucleoside in mRNA + S-adenosyl-L-homocysteine</text>
        <dbReference type="Rhea" id="RHEA:67008"/>
        <dbReference type="Rhea" id="RHEA-COMP:17166"/>
        <dbReference type="Rhea" id="RHEA-COMP:17167"/>
        <dbReference type="ChEBI" id="CHEBI:57856"/>
        <dbReference type="ChEBI" id="CHEBI:59789"/>
        <dbReference type="ChEBI" id="CHEBI:156461"/>
        <dbReference type="ChEBI" id="CHEBI:167617"/>
        <dbReference type="EC" id="2.1.1.56"/>
    </reaction>
</comment>
<comment type="catalytic activity">
    <reaction evidence="18">
        <text>a 5'-end (N(7)-methyl 5'-triphosphoguanosine)-ribonucleoside in mRNA + S-adenosyl-L-methionine = a 5'-end (N(7)-methyl 5'-triphosphoguanosine)-(2'-O-methyl-ribonucleoside) in mRNA + S-adenosyl-L-homocysteine + H(+)</text>
        <dbReference type="Rhea" id="RHEA:67020"/>
        <dbReference type="Rhea" id="RHEA-COMP:17167"/>
        <dbReference type="Rhea" id="RHEA-COMP:17168"/>
        <dbReference type="ChEBI" id="CHEBI:15378"/>
        <dbReference type="ChEBI" id="CHEBI:57856"/>
        <dbReference type="ChEBI" id="CHEBI:59789"/>
        <dbReference type="ChEBI" id="CHEBI:156461"/>
        <dbReference type="ChEBI" id="CHEBI:167609"/>
        <dbReference type="EC" id="2.1.1.57"/>
    </reaction>
</comment>
<comment type="cofactor">
    <cofactor>
        <name>Mn(2+)</name>
        <dbReference type="ChEBI" id="CHEBI:29035"/>
    </cofactor>
    <cofactor>
        <name>Mg(2+)</name>
        <dbReference type="ChEBI" id="CHEBI:18420"/>
    </cofactor>
    <text evidence="7">For RNA-directed RNA polymerase NS5 activity; Mn(2+) is more effective than Mg(2+).</text>
</comment>
<comment type="subunit">
    <molecule>Capsid protein C</molecule>
    <text evidence="6">Homodimer (By similarity). Interacts (via N-terminus) with host EXOC1 (via C-terminus); this interaction results in EXOC1 degradation through the proteasome degradation pathway (By similarity).</text>
</comment>
<comment type="subunit">
    <molecule>Protein prM</molecule>
    <text evidence="6">Forms heterodimers with envelope protein E in the endoplasmic reticulum and Golgi.</text>
</comment>
<comment type="subunit">
    <molecule>Envelope protein E</molecule>
    <text evidence="6">Homodimer; in the endoplasmic reticulum and Golgi (By similarity). Interacts with protein prM (By similarity). Interacts with non-structural protein 1 (By similarity). Interacts with host HSPA5 (By similarity).</text>
</comment>
<comment type="subunit">
    <molecule>Non-structural protein 1</molecule>
    <text evidence="11">Homodimer; Homohexamer when secreted (By similarity). Interacts with envelope protein E (By similarity). NS1 interacts with NS4B (By similarity). Interacts with host complement protein CFH; this interaction leads to the degradation of C3 (By similarity).</text>
</comment>
<comment type="subunit">
    <molecule>Non-structural protein 2A</molecule>
    <text evidence="1">Interacts (via N-terminus) with serine protease NS3.</text>
</comment>
<comment type="subunit">
    <molecule>Serine protease subunit NS2B</molecule>
    <text evidence="6">Forms a heterodimer with serine protease NS3 (By similarity). May form homooligomers (By similarity).</text>
</comment>
<comment type="subunit">
    <molecule>Serine protease NS3</molecule>
    <text evidence="6">Forms a heterodimer with NS2B (By similarity). Interacts with non-structural protein 2A (via N-terminus) (By similarity). Interacts with NS4B (By similarity). Interacts with unphosphorylated RNA-directed RNA polymerase NS5; this interaction stimulates RNA-directed RNA polymerase NS5 guanylyltransferase activity (By similarity). Interacts with host ILF2 (By similarity).</text>
</comment>
<comment type="subunit">
    <molecule>Non-structural protein 4B</molecule>
    <text evidence="6">Interacts with serine protease NS3 (By similarity).</text>
</comment>
<comment type="subunit">
    <molecule>RNA-directed RNA polymerase NS5</molecule>
    <text evidence="6">Homodimer. Interacts with host STAT2; this interaction inhibits the phosphorylation of the latter, and, when all viral proteins are present (polyprotein), targets STAT2 for degradation. Interacts with serine protease NS3.</text>
</comment>
<comment type="subcellular location">
    <molecule>Capsid protein C</molecule>
    <subcellularLocation>
        <location evidence="6">Virion</location>
    </subcellularLocation>
    <subcellularLocation>
        <location evidence="6">Host nucleus</location>
    </subcellularLocation>
    <subcellularLocation>
        <location evidence="2">Host cytoplasm</location>
    </subcellularLocation>
    <subcellularLocation>
        <location evidence="2">Host cytoplasm</location>
        <location evidence="2">Host perinuclear region</location>
    </subcellularLocation>
</comment>
<comment type="subcellular location">
    <molecule>Peptide pr</molecule>
    <subcellularLocation>
        <location evidence="6">Secreted</location>
    </subcellularLocation>
</comment>
<comment type="subcellular location">
    <molecule>Small envelope protein M</molecule>
    <subcellularLocation>
        <location evidence="1">Virion membrane</location>
        <topology evidence="1">Multi-pass membrane protein</topology>
    </subcellularLocation>
    <subcellularLocation>
        <location evidence="1">Host endoplasmic reticulum membrane</location>
        <topology evidence="12">Multi-pass membrane protein</topology>
    </subcellularLocation>
    <text evidence="1">ER membrane retention is mediated by the transmembrane domains.</text>
</comment>
<comment type="subcellular location">
    <molecule>Envelope protein E</molecule>
    <subcellularLocation>
        <location evidence="20">Virion membrane</location>
        <topology evidence="1">Multi-pass membrane protein</topology>
    </subcellularLocation>
    <subcellularLocation>
        <location evidence="1">Host endoplasmic reticulum membrane</location>
        <topology evidence="12">Multi-pass membrane protein</topology>
    </subcellularLocation>
    <subcellularLocation>
        <location evidence="1">Host cell surface</location>
    </subcellularLocation>
    <text evidence="1">ER membrane retention is mediated by the transmembrane domains.</text>
</comment>
<comment type="subcellular location">
    <molecule>Non-structural protein 1</molecule>
    <subcellularLocation>
        <location evidence="6">Secreted</location>
    </subcellularLocation>
    <subcellularLocation>
        <location>Host endoplasmic reticulum membrane</location>
        <topology>Peripheral membrane protein</topology>
        <orientation evidence="6">Lumenal side</orientation>
    </subcellularLocation>
    <text evidence="11">Located in RE-derived vesicles hosting the replication complex.</text>
</comment>
<comment type="subcellular location">
    <molecule>Non-structural protein 2A</molecule>
    <subcellularLocation>
        <location evidence="3">Host endoplasmic reticulum membrane</location>
        <topology evidence="6">Multi-pass membrane protein</topology>
    </subcellularLocation>
</comment>
<comment type="subcellular location">
    <molecule>Serine protease subunit NS2B</molecule>
    <subcellularLocation>
        <location>Host endoplasmic reticulum membrane</location>
        <topology evidence="6">Multi-pass membrane protein</topology>
    </subcellularLocation>
</comment>
<comment type="subcellular location">
    <molecule>Serine protease NS3</molecule>
    <subcellularLocation>
        <location evidence="17">Host endoplasmic reticulum membrane</location>
        <topology evidence="17">Peripheral membrane protein</topology>
        <orientation evidence="17">Cytoplasmic side</orientation>
    </subcellularLocation>
    <text evidence="17">Remains non-covalently associated to serine protease subunit NS2B.</text>
</comment>
<comment type="subcellular location">
    <molecule>Non-structural protein 4A</molecule>
    <subcellularLocation>
        <location evidence="3">Host endoplasmic reticulum membrane</location>
        <topology evidence="6">Multi-pass membrane protein</topology>
    </subcellularLocation>
    <text evidence="6">Located in RE-associated vesicles hosting the replication complex.</text>
</comment>
<comment type="subcellular location">
    <molecule>Non-structural protein 4B</molecule>
    <subcellularLocation>
        <location evidence="6">Host endoplasmic reticulum membrane</location>
        <topology evidence="6">Multi-pass membrane protein</topology>
    </subcellularLocation>
    <text evidence="11">Located in RE-derived vesicles hosting the replication complex.</text>
</comment>
<comment type="subcellular location">
    <molecule>RNA-directed RNA polymerase NS5</molecule>
    <subcellularLocation>
        <location>Host endoplasmic reticulum membrane</location>
        <topology>Peripheral membrane protein</topology>
        <orientation>Cytoplasmic side</orientation>
    </subcellularLocation>
    <subcellularLocation>
        <location evidence="2">Host nucleus</location>
    </subcellularLocation>
    <text evidence="6">Located in RE-associated vesicles hosting the replication complex. NS5 protein is mainly localized in the nucleus rather than in ER vesicles.</text>
</comment>
<comment type="alternative products">
    <event type="ribosomal frameshifting"/>
    <isoform>
        <id>P19110-1</id>
        <name>Genome polyprotein</name>
        <sequence type="displayed"/>
    </isoform>
    <isoform>
        <id>P0DOH9-1</id>
        <name>Structural polyprotein</name>
        <sequence type="external"/>
    </isoform>
</comment>
<comment type="domain">
    <text evidence="6">The transmembrane domains of the small envelope protein M and envelope protein E contain an endoplasmic reticulum retention signal.</text>
</comment>
<comment type="PTM">
    <molecule>Genome polyprotein</molecule>
    <text evidence="6">Specific enzymatic cleavages in vivo yield mature proteins. Cleavages in the lumen of endoplasmic reticulum are performed by host signal peptidase, whereas cleavages in the cytoplasmic side are performed by serine protease NS3. Signal cleavage at the 2K-4B site requires a prior NS3 protease-mediated cleavage at the 4A-2K site.</text>
</comment>
<comment type="PTM">
    <molecule>Protein prM</molecule>
    <text evidence="6">Cleaved in post-Golgi vesicles by a host furin, releasing the mature small envelope protein M, and peptide pr. This cleavage is incomplete as up to 30% of viral particles still carry uncleaved prM.</text>
</comment>
<comment type="PTM">
    <molecule>Envelope protein E</molecule>
    <text evidence="6">N-glycosylated.</text>
</comment>
<comment type="PTM">
    <molecule>Non-structural protein 1</molecule>
    <text evidence="6">N-glycosylated. The excreted form is glycosylated and this is required for efficient secretion of the protein from infected cells.</text>
</comment>
<comment type="PTM">
    <molecule>Serine protease NS3</molecule>
    <text evidence="9">Acetylated by host KAT5. Acetylation modulates NS3 RNA-binding and unwinding activities and plays an important positive role for viral replication.</text>
</comment>
<comment type="PTM">
    <molecule>RNA-directed RNA polymerase NS5</molecule>
    <text evidence="6">Phosphorylated on serines residues. This phosphorylation may trigger NS5 nuclear localization.</text>
</comment>
<comment type="similarity">
    <text evidence="18">In the N-terminal section; belongs to the class I-like SAM-binding methyltransferase superfamily. mRNA cap 0-1 NS5-type methyltransferase family.</text>
</comment>
<reference key="1">
    <citation type="journal article" date="1991" name="Virus Genes">
        <title>Identification of mutations that occurred on the genome of Japanese encephalitis virus during the attenuation process.</title>
        <authorList>
            <person name="Aihara S."/>
            <person name="Rao C."/>
            <person name="Yu Y.X."/>
            <person name="Lee T."/>
            <person name="Watanabe K."/>
            <person name="Komiya T."/>
            <person name="Sumiyoshi H."/>
            <person name="Hashimoto H."/>
            <person name="Nomoto A."/>
        </authorList>
    </citation>
    <scope>NUCLEOTIDE SEQUENCE [GENOMIC RNA]</scope>
</reference>